<name>AROA_YERPY</name>
<keyword id="KW-0028">Amino-acid biosynthesis</keyword>
<keyword id="KW-0057">Aromatic amino acid biosynthesis</keyword>
<keyword id="KW-0963">Cytoplasm</keyword>
<keyword id="KW-0808">Transferase</keyword>
<evidence type="ECO:0000255" key="1">
    <source>
        <dbReference type="HAMAP-Rule" id="MF_00210"/>
    </source>
</evidence>
<accession>B1JRD9</accession>
<dbReference type="EC" id="2.5.1.19" evidence="1"/>
<dbReference type="EMBL" id="CP000950">
    <property type="protein sequence ID" value="ACA68947.1"/>
    <property type="molecule type" value="Genomic_DNA"/>
</dbReference>
<dbReference type="RefSeq" id="WP_011192056.1">
    <property type="nucleotide sequence ID" value="NZ_CP009792.1"/>
</dbReference>
<dbReference type="SMR" id="B1JRD9"/>
<dbReference type="GeneID" id="49786502"/>
<dbReference type="KEGG" id="ypy:YPK_2670"/>
<dbReference type="PATRIC" id="fig|502800.11.peg.3370"/>
<dbReference type="UniPathway" id="UPA00053">
    <property type="reaction ID" value="UER00089"/>
</dbReference>
<dbReference type="GO" id="GO:0005737">
    <property type="term" value="C:cytoplasm"/>
    <property type="evidence" value="ECO:0007669"/>
    <property type="project" value="UniProtKB-SubCell"/>
</dbReference>
<dbReference type="GO" id="GO:0003866">
    <property type="term" value="F:3-phosphoshikimate 1-carboxyvinyltransferase activity"/>
    <property type="evidence" value="ECO:0007669"/>
    <property type="project" value="UniProtKB-UniRule"/>
</dbReference>
<dbReference type="GO" id="GO:0008652">
    <property type="term" value="P:amino acid biosynthetic process"/>
    <property type="evidence" value="ECO:0007669"/>
    <property type="project" value="UniProtKB-KW"/>
</dbReference>
<dbReference type="GO" id="GO:0009073">
    <property type="term" value="P:aromatic amino acid family biosynthetic process"/>
    <property type="evidence" value="ECO:0007669"/>
    <property type="project" value="UniProtKB-KW"/>
</dbReference>
<dbReference type="GO" id="GO:0009423">
    <property type="term" value="P:chorismate biosynthetic process"/>
    <property type="evidence" value="ECO:0007669"/>
    <property type="project" value="UniProtKB-UniRule"/>
</dbReference>
<dbReference type="CDD" id="cd01556">
    <property type="entry name" value="EPSP_synthase"/>
    <property type="match status" value="1"/>
</dbReference>
<dbReference type="FunFam" id="3.65.10.10:FF:000003">
    <property type="entry name" value="3-phosphoshikimate 1-carboxyvinyltransferase"/>
    <property type="match status" value="1"/>
</dbReference>
<dbReference type="FunFam" id="3.65.10.10:FF:000004">
    <property type="entry name" value="3-phosphoshikimate 1-carboxyvinyltransferase"/>
    <property type="match status" value="1"/>
</dbReference>
<dbReference type="Gene3D" id="3.65.10.10">
    <property type="entry name" value="Enolpyruvate transferase domain"/>
    <property type="match status" value="2"/>
</dbReference>
<dbReference type="HAMAP" id="MF_00210">
    <property type="entry name" value="EPSP_synth"/>
    <property type="match status" value="1"/>
</dbReference>
<dbReference type="InterPro" id="IPR001986">
    <property type="entry name" value="Enolpyruvate_Tfrase_dom"/>
</dbReference>
<dbReference type="InterPro" id="IPR036968">
    <property type="entry name" value="Enolpyruvate_Tfrase_sf"/>
</dbReference>
<dbReference type="InterPro" id="IPR006264">
    <property type="entry name" value="EPSP_synthase"/>
</dbReference>
<dbReference type="InterPro" id="IPR023193">
    <property type="entry name" value="EPSP_synthase_CS"/>
</dbReference>
<dbReference type="InterPro" id="IPR013792">
    <property type="entry name" value="RNA3'P_cycl/enolpyr_Trfase_a/b"/>
</dbReference>
<dbReference type="NCBIfam" id="TIGR01356">
    <property type="entry name" value="aroA"/>
    <property type="match status" value="1"/>
</dbReference>
<dbReference type="PANTHER" id="PTHR21090">
    <property type="entry name" value="AROM/DEHYDROQUINATE SYNTHASE"/>
    <property type="match status" value="1"/>
</dbReference>
<dbReference type="PANTHER" id="PTHR21090:SF5">
    <property type="entry name" value="PENTAFUNCTIONAL AROM POLYPEPTIDE"/>
    <property type="match status" value="1"/>
</dbReference>
<dbReference type="Pfam" id="PF00275">
    <property type="entry name" value="EPSP_synthase"/>
    <property type="match status" value="1"/>
</dbReference>
<dbReference type="PIRSF" id="PIRSF000505">
    <property type="entry name" value="EPSPS"/>
    <property type="match status" value="1"/>
</dbReference>
<dbReference type="SUPFAM" id="SSF55205">
    <property type="entry name" value="EPT/RTPC-like"/>
    <property type="match status" value="1"/>
</dbReference>
<dbReference type="PROSITE" id="PS00104">
    <property type="entry name" value="EPSP_SYNTHASE_1"/>
    <property type="match status" value="1"/>
</dbReference>
<dbReference type="PROSITE" id="PS00885">
    <property type="entry name" value="EPSP_SYNTHASE_2"/>
    <property type="match status" value="1"/>
</dbReference>
<comment type="function">
    <text evidence="1">Catalyzes the transfer of the enolpyruvyl moiety of phosphoenolpyruvate (PEP) to the 5-hydroxyl of shikimate-3-phosphate (S3P) to produce enolpyruvyl shikimate-3-phosphate and inorganic phosphate.</text>
</comment>
<comment type="catalytic activity">
    <reaction evidence="1">
        <text>3-phosphoshikimate + phosphoenolpyruvate = 5-O-(1-carboxyvinyl)-3-phosphoshikimate + phosphate</text>
        <dbReference type="Rhea" id="RHEA:21256"/>
        <dbReference type="ChEBI" id="CHEBI:43474"/>
        <dbReference type="ChEBI" id="CHEBI:57701"/>
        <dbReference type="ChEBI" id="CHEBI:58702"/>
        <dbReference type="ChEBI" id="CHEBI:145989"/>
        <dbReference type="EC" id="2.5.1.19"/>
    </reaction>
    <physiologicalReaction direction="left-to-right" evidence="1">
        <dbReference type="Rhea" id="RHEA:21257"/>
    </physiologicalReaction>
</comment>
<comment type="pathway">
    <text evidence="1">Metabolic intermediate biosynthesis; chorismate biosynthesis; chorismate from D-erythrose 4-phosphate and phosphoenolpyruvate: step 6/7.</text>
</comment>
<comment type="subunit">
    <text evidence="1">Monomer.</text>
</comment>
<comment type="subcellular location">
    <subcellularLocation>
        <location evidence="1">Cytoplasm</location>
    </subcellularLocation>
</comment>
<comment type="similarity">
    <text evidence="1">Belongs to the EPSP synthase family.</text>
</comment>
<reference key="1">
    <citation type="submission" date="2008-02" db="EMBL/GenBank/DDBJ databases">
        <title>Complete sequence of Yersinia pseudotuberculosis YPIII.</title>
        <authorList>
            <consortium name="US DOE Joint Genome Institute"/>
            <person name="Copeland A."/>
            <person name="Lucas S."/>
            <person name="Lapidus A."/>
            <person name="Glavina del Rio T."/>
            <person name="Dalin E."/>
            <person name="Tice H."/>
            <person name="Bruce D."/>
            <person name="Goodwin L."/>
            <person name="Pitluck S."/>
            <person name="Munk A.C."/>
            <person name="Brettin T."/>
            <person name="Detter J.C."/>
            <person name="Han C."/>
            <person name="Tapia R."/>
            <person name="Schmutz J."/>
            <person name="Larimer F."/>
            <person name="Land M."/>
            <person name="Hauser L."/>
            <person name="Challacombe J.F."/>
            <person name="Green L."/>
            <person name="Lindler L.E."/>
            <person name="Nikolich M.P."/>
            <person name="Richardson P."/>
        </authorList>
    </citation>
    <scope>NUCLEOTIDE SEQUENCE [LARGE SCALE GENOMIC DNA]</scope>
    <source>
        <strain>YPIII</strain>
    </source>
</reference>
<gene>
    <name evidence="1" type="primary">aroA</name>
    <name type="ordered locus">YPK_2670</name>
</gene>
<proteinExistence type="inferred from homology"/>
<organism>
    <name type="scientific">Yersinia pseudotuberculosis serotype O:3 (strain YPIII)</name>
    <dbReference type="NCBI Taxonomy" id="502800"/>
    <lineage>
        <taxon>Bacteria</taxon>
        <taxon>Pseudomonadati</taxon>
        <taxon>Pseudomonadota</taxon>
        <taxon>Gammaproteobacteria</taxon>
        <taxon>Enterobacterales</taxon>
        <taxon>Yersiniaceae</taxon>
        <taxon>Yersinia</taxon>
    </lineage>
</organism>
<feature type="chain" id="PRO_1000099770" description="3-phosphoshikimate 1-carboxyvinyltransferase">
    <location>
        <begin position="1"/>
        <end position="428"/>
    </location>
</feature>
<feature type="active site" description="Proton acceptor" evidence="1">
    <location>
        <position position="314"/>
    </location>
</feature>
<feature type="binding site" evidence="1">
    <location>
        <position position="23"/>
    </location>
    <ligand>
        <name>3-phosphoshikimate</name>
        <dbReference type="ChEBI" id="CHEBI:145989"/>
    </ligand>
</feature>
<feature type="binding site" evidence="1">
    <location>
        <position position="23"/>
    </location>
    <ligand>
        <name>phosphoenolpyruvate</name>
        <dbReference type="ChEBI" id="CHEBI:58702"/>
    </ligand>
</feature>
<feature type="binding site" evidence="1">
    <location>
        <position position="24"/>
    </location>
    <ligand>
        <name>3-phosphoshikimate</name>
        <dbReference type="ChEBI" id="CHEBI:145989"/>
    </ligand>
</feature>
<feature type="binding site" evidence="1">
    <location>
        <position position="28"/>
    </location>
    <ligand>
        <name>3-phosphoshikimate</name>
        <dbReference type="ChEBI" id="CHEBI:145989"/>
    </ligand>
</feature>
<feature type="binding site" evidence="1">
    <location>
        <position position="97"/>
    </location>
    <ligand>
        <name>phosphoenolpyruvate</name>
        <dbReference type="ChEBI" id="CHEBI:58702"/>
    </ligand>
</feature>
<feature type="binding site" evidence="1">
    <location>
        <position position="125"/>
    </location>
    <ligand>
        <name>phosphoenolpyruvate</name>
        <dbReference type="ChEBI" id="CHEBI:58702"/>
    </ligand>
</feature>
<feature type="binding site" evidence="1">
    <location>
        <position position="170"/>
    </location>
    <ligand>
        <name>3-phosphoshikimate</name>
        <dbReference type="ChEBI" id="CHEBI:145989"/>
    </ligand>
</feature>
<feature type="binding site" evidence="1">
    <location>
        <position position="171"/>
    </location>
    <ligand>
        <name>3-phosphoshikimate</name>
        <dbReference type="ChEBI" id="CHEBI:145989"/>
    </ligand>
</feature>
<feature type="binding site" evidence="1">
    <location>
        <position position="172"/>
    </location>
    <ligand>
        <name>3-phosphoshikimate</name>
        <dbReference type="ChEBI" id="CHEBI:145989"/>
    </ligand>
</feature>
<feature type="binding site" evidence="1">
    <location>
        <position position="172"/>
    </location>
    <ligand>
        <name>phosphoenolpyruvate</name>
        <dbReference type="ChEBI" id="CHEBI:58702"/>
    </ligand>
</feature>
<feature type="binding site" evidence="1">
    <location>
        <position position="198"/>
    </location>
    <ligand>
        <name>3-phosphoshikimate</name>
        <dbReference type="ChEBI" id="CHEBI:145989"/>
    </ligand>
</feature>
<feature type="binding site" evidence="1">
    <location>
        <position position="314"/>
    </location>
    <ligand>
        <name>3-phosphoshikimate</name>
        <dbReference type="ChEBI" id="CHEBI:145989"/>
    </ligand>
</feature>
<feature type="binding site" evidence="1">
    <location>
        <position position="337"/>
    </location>
    <ligand>
        <name>3-phosphoshikimate</name>
        <dbReference type="ChEBI" id="CHEBI:145989"/>
    </ligand>
</feature>
<feature type="binding site" evidence="1">
    <location>
        <position position="341"/>
    </location>
    <ligand>
        <name>3-phosphoshikimate</name>
        <dbReference type="ChEBI" id="CHEBI:145989"/>
    </ligand>
</feature>
<feature type="binding site" evidence="1">
    <location>
        <position position="345"/>
    </location>
    <ligand>
        <name>phosphoenolpyruvate</name>
        <dbReference type="ChEBI" id="CHEBI:58702"/>
    </ligand>
</feature>
<feature type="binding site" evidence="1">
    <location>
        <position position="387"/>
    </location>
    <ligand>
        <name>phosphoenolpyruvate</name>
        <dbReference type="ChEBI" id="CHEBI:58702"/>
    </ligand>
</feature>
<feature type="binding site" evidence="1">
    <location>
        <position position="412"/>
    </location>
    <ligand>
        <name>phosphoenolpyruvate</name>
        <dbReference type="ChEBI" id="CHEBI:58702"/>
    </ligand>
</feature>
<protein>
    <recommendedName>
        <fullName evidence="1">3-phosphoshikimate 1-carboxyvinyltransferase</fullName>
        <ecNumber evidence="1">2.5.1.19</ecNumber>
    </recommendedName>
    <alternativeName>
        <fullName evidence="1">5-enolpyruvylshikimate-3-phosphate synthase</fullName>
        <shortName evidence="1">EPSP synthase</shortName>
        <shortName evidence="1">EPSPS</shortName>
    </alternativeName>
</protein>
<sequence>MLESLTLQPIALVNGTVNLPGSKSVSNRALLLAALAEGTTQLNNVLDSDDIRHMLNALQALGVNFRLSADRTCCEVDGLGGKLVAEQPLSLFLGNAGTAMRPLAAVLCLGNSDIVLTGEPRMKERPIGHLVDALRQGGAQIDYLEQENYPPLRLRGGFRGGELTVDGRVSSQFLTALLMTAPLAEQDTTIRIMGDLVSKPYIDITLHLMKAFGIDVGHENYQIFHIKGGQTYRSPGTYLVEGDASSASYFLAAAAIKGGTVRVTGIGKKSVQGDTKFADVLEKMGAKVTWGDDYIECSRGELQGIDMDMNHIPDAAMTIATTALFATGPTTIRNIYNWRVKETDRLTAMATELRKVGAEVEEGEDYIRVVPPVQLTAADIGTYDDHRMAMCFSLVALSDTPVTILDPKCTAKTFPDYFEQFARLSQLA</sequence>